<name>Y490_PYRAB</name>
<accession>Q9V1D7</accession>
<accession>G8ZGK0</accession>
<evidence type="ECO:0000305" key="1"/>
<protein>
    <recommendedName>
        <fullName>UPF0145 protein PYRAB04900</fullName>
    </recommendedName>
</protein>
<comment type="similarity">
    <text evidence="1">Belongs to the UPF0145 family.</text>
</comment>
<comment type="sequence caution" evidence="1">
    <conflict type="erroneous initiation">
        <sequence resource="EMBL-CDS" id="CAB49412"/>
    </conflict>
    <text>Extended N-terminus.</text>
</comment>
<reference key="1">
    <citation type="journal article" date="2003" name="Mol. Microbiol.">
        <title>An integrated analysis of the genome of the hyperthermophilic archaeon Pyrococcus abyssi.</title>
        <authorList>
            <person name="Cohen G.N."/>
            <person name="Barbe V."/>
            <person name="Flament D."/>
            <person name="Galperin M."/>
            <person name="Heilig R."/>
            <person name="Lecompte O."/>
            <person name="Poch O."/>
            <person name="Prieur D."/>
            <person name="Querellou J."/>
            <person name="Ripp R."/>
            <person name="Thierry J.-C."/>
            <person name="Van der Oost J."/>
            <person name="Weissenbach J."/>
            <person name="Zivanovic Y."/>
            <person name="Forterre P."/>
        </authorList>
    </citation>
    <scope>NUCLEOTIDE SEQUENCE [LARGE SCALE GENOMIC DNA]</scope>
    <source>
        <strain>GE5 / Orsay</strain>
    </source>
</reference>
<reference key="2">
    <citation type="journal article" date="2012" name="Curr. Microbiol.">
        <title>Re-annotation of two hyperthermophilic archaea Pyrococcus abyssi GE5 and Pyrococcus furiosus DSM 3638.</title>
        <authorList>
            <person name="Gao J."/>
            <person name="Wang J."/>
        </authorList>
    </citation>
    <scope>GENOME REANNOTATION</scope>
    <source>
        <strain>GE5 / Orsay</strain>
    </source>
</reference>
<dbReference type="EMBL" id="AJ248284">
    <property type="protein sequence ID" value="CAB49412.1"/>
    <property type="status" value="ALT_INIT"/>
    <property type="molecule type" value="Genomic_DNA"/>
</dbReference>
<dbReference type="EMBL" id="HE613800">
    <property type="protein sequence ID" value="CCE69879.1"/>
    <property type="molecule type" value="Genomic_DNA"/>
</dbReference>
<dbReference type="PIR" id="E75166">
    <property type="entry name" value="E75166"/>
</dbReference>
<dbReference type="RefSeq" id="WP_048146564.1">
    <property type="nucleotide sequence ID" value="NC_000868.1"/>
</dbReference>
<dbReference type="SMR" id="Q9V1D7"/>
<dbReference type="STRING" id="272844.PAB0329"/>
<dbReference type="KEGG" id="pab:PAB0329"/>
<dbReference type="PATRIC" id="fig|272844.11.peg.525"/>
<dbReference type="eggNOG" id="arCOG02287">
    <property type="taxonomic scope" value="Archaea"/>
</dbReference>
<dbReference type="HOGENOM" id="CLU_117144_1_2_2"/>
<dbReference type="OrthoDB" id="59443at2157"/>
<dbReference type="Proteomes" id="UP000000810">
    <property type="component" value="Chromosome"/>
</dbReference>
<dbReference type="Proteomes" id="UP000009139">
    <property type="component" value="Chromosome"/>
</dbReference>
<dbReference type="Gene3D" id="3.30.110.70">
    <property type="entry name" value="Hypothetical protein apc22750. Chain B"/>
    <property type="match status" value="1"/>
</dbReference>
<dbReference type="HAMAP" id="MF_00338">
    <property type="entry name" value="UPF0145"/>
    <property type="match status" value="1"/>
</dbReference>
<dbReference type="InterPro" id="IPR035439">
    <property type="entry name" value="UPF0145_dom_sf"/>
</dbReference>
<dbReference type="InterPro" id="IPR002765">
    <property type="entry name" value="UPF0145_YbjQ-like"/>
</dbReference>
<dbReference type="NCBIfam" id="NF002989">
    <property type="entry name" value="PRK03732.1"/>
    <property type="match status" value="1"/>
</dbReference>
<dbReference type="PANTHER" id="PTHR34068:SF2">
    <property type="entry name" value="UPF0145 PROTEIN SCO3412"/>
    <property type="match status" value="1"/>
</dbReference>
<dbReference type="PANTHER" id="PTHR34068">
    <property type="entry name" value="UPF0145 PROTEIN YBJQ"/>
    <property type="match status" value="1"/>
</dbReference>
<dbReference type="Pfam" id="PF01906">
    <property type="entry name" value="YbjQ_1"/>
    <property type="match status" value="1"/>
</dbReference>
<dbReference type="SUPFAM" id="SSF117782">
    <property type="entry name" value="YbjQ-like"/>
    <property type="match status" value="1"/>
</dbReference>
<organism>
    <name type="scientific">Pyrococcus abyssi (strain GE5 / Orsay)</name>
    <dbReference type="NCBI Taxonomy" id="272844"/>
    <lineage>
        <taxon>Archaea</taxon>
        <taxon>Methanobacteriati</taxon>
        <taxon>Methanobacteriota</taxon>
        <taxon>Thermococci</taxon>
        <taxon>Thermococcales</taxon>
        <taxon>Thermococcaceae</taxon>
        <taxon>Pyrococcus</taxon>
    </lineage>
</organism>
<proteinExistence type="inferred from homology"/>
<gene>
    <name type="ordered locus">PYRAB04900</name>
    <name type="ORF">PAB0329</name>
</gene>
<sequence length="114" mass="12481">METIEGIIVVTTSEIPGYRIVEVKGIARGGVVRATHLGRDIMALLRNIKGGEVKEYTEMMAEAREEALRRMALHAKELGANAVVNMRFATSNLGGSMAEIYAYGTAVVIEREEK</sequence>
<feature type="chain" id="PRO_0000138499" description="UPF0145 protein PYRAB04900">
    <location>
        <begin position="1"/>
        <end position="114"/>
    </location>
</feature>